<dbReference type="EC" id="6.1.1.4" evidence="1"/>
<dbReference type="EMBL" id="AE014184">
    <property type="protein sequence ID" value="AAO44482.1"/>
    <property type="molecule type" value="Genomic_DNA"/>
</dbReference>
<dbReference type="RefSeq" id="WP_011102542.1">
    <property type="nucleotide sequence ID" value="NC_004572.3"/>
</dbReference>
<dbReference type="SMR" id="Q83GC6"/>
<dbReference type="STRING" id="203267.TWT_385"/>
<dbReference type="KEGG" id="twh:TWT_385"/>
<dbReference type="eggNOG" id="COG0495">
    <property type="taxonomic scope" value="Bacteria"/>
</dbReference>
<dbReference type="HOGENOM" id="CLU_004427_0_0_11"/>
<dbReference type="OrthoDB" id="9810365at2"/>
<dbReference type="Proteomes" id="UP000002200">
    <property type="component" value="Chromosome"/>
</dbReference>
<dbReference type="GO" id="GO:0005737">
    <property type="term" value="C:cytoplasm"/>
    <property type="evidence" value="ECO:0007669"/>
    <property type="project" value="UniProtKB-SubCell"/>
</dbReference>
<dbReference type="GO" id="GO:0002161">
    <property type="term" value="F:aminoacyl-tRNA deacylase activity"/>
    <property type="evidence" value="ECO:0007669"/>
    <property type="project" value="InterPro"/>
</dbReference>
<dbReference type="GO" id="GO:0005524">
    <property type="term" value="F:ATP binding"/>
    <property type="evidence" value="ECO:0007669"/>
    <property type="project" value="UniProtKB-UniRule"/>
</dbReference>
<dbReference type="GO" id="GO:0004823">
    <property type="term" value="F:leucine-tRNA ligase activity"/>
    <property type="evidence" value="ECO:0007669"/>
    <property type="project" value="UniProtKB-UniRule"/>
</dbReference>
<dbReference type="GO" id="GO:0006429">
    <property type="term" value="P:leucyl-tRNA aminoacylation"/>
    <property type="evidence" value="ECO:0007669"/>
    <property type="project" value="UniProtKB-UniRule"/>
</dbReference>
<dbReference type="CDD" id="cd00812">
    <property type="entry name" value="LeuRS_core"/>
    <property type="match status" value="1"/>
</dbReference>
<dbReference type="FunFam" id="3.40.50.620:FF:000003">
    <property type="entry name" value="Leucine--tRNA ligase"/>
    <property type="match status" value="1"/>
</dbReference>
<dbReference type="Gene3D" id="3.10.20.590">
    <property type="match status" value="1"/>
</dbReference>
<dbReference type="Gene3D" id="3.40.50.620">
    <property type="entry name" value="HUPs"/>
    <property type="match status" value="2"/>
</dbReference>
<dbReference type="Gene3D" id="1.10.730.10">
    <property type="entry name" value="Isoleucyl-tRNA Synthetase, Domain 1"/>
    <property type="match status" value="1"/>
</dbReference>
<dbReference type="HAMAP" id="MF_00049_B">
    <property type="entry name" value="Leu_tRNA_synth_B"/>
    <property type="match status" value="1"/>
</dbReference>
<dbReference type="InterPro" id="IPR001412">
    <property type="entry name" value="aa-tRNA-synth_I_CS"/>
</dbReference>
<dbReference type="InterPro" id="IPR002300">
    <property type="entry name" value="aa-tRNA-synth_Ia"/>
</dbReference>
<dbReference type="InterPro" id="IPR002302">
    <property type="entry name" value="Leu-tRNA-ligase"/>
</dbReference>
<dbReference type="InterPro" id="IPR025709">
    <property type="entry name" value="Leu_tRNA-synth_edit"/>
</dbReference>
<dbReference type="InterPro" id="IPR013155">
    <property type="entry name" value="M/V/L/I-tRNA-synth_anticd-bd"/>
</dbReference>
<dbReference type="InterPro" id="IPR015413">
    <property type="entry name" value="Methionyl/Leucyl_tRNA_Synth"/>
</dbReference>
<dbReference type="InterPro" id="IPR014729">
    <property type="entry name" value="Rossmann-like_a/b/a_fold"/>
</dbReference>
<dbReference type="InterPro" id="IPR009080">
    <property type="entry name" value="tRNAsynth_Ia_anticodon-bd"/>
</dbReference>
<dbReference type="InterPro" id="IPR009008">
    <property type="entry name" value="Val/Leu/Ile-tRNA-synth_edit"/>
</dbReference>
<dbReference type="NCBIfam" id="TIGR00396">
    <property type="entry name" value="leuS_bact"/>
    <property type="match status" value="1"/>
</dbReference>
<dbReference type="PANTHER" id="PTHR43740:SF2">
    <property type="entry name" value="LEUCINE--TRNA LIGASE, MITOCHONDRIAL"/>
    <property type="match status" value="1"/>
</dbReference>
<dbReference type="PANTHER" id="PTHR43740">
    <property type="entry name" value="LEUCYL-TRNA SYNTHETASE"/>
    <property type="match status" value="1"/>
</dbReference>
<dbReference type="Pfam" id="PF08264">
    <property type="entry name" value="Anticodon_1"/>
    <property type="match status" value="1"/>
</dbReference>
<dbReference type="Pfam" id="PF00133">
    <property type="entry name" value="tRNA-synt_1"/>
    <property type="match status" value="1"/>
</dbReference>
<dbReference type="Pfam" id="PF13603">
    <property type="entry name" value="tRNA-synt_1_2"/>
    <property type="match status" value="1"/>
</dbReference>
<dbReference type="Pfam" id="PF09334">
    <property type="entry name" value="tRNA-synt_1g"/>
    <property type="match status" value="1"/>
</dbReference>
<dbReference type="PRINTS" id="PR00985">
    <property type="entry name" value="TRNASYNTHLEU"/>
</dbReference>
<dbReference type="SUPFAM" id="SSF47323">
    <property type="entry name" value="Anticodon-binding domain of a subclass of class I aminoacyl-tRNA synthetases"/>
    <property type="match status" value="1"/>
</dbReference>
<dbReference type="SUPFAM" id="SSF52374">
    <property type="entry name" value="Nucleotidylyl transferase"/>
    <property type="match status" value="1"/>
</dbReference>
<dbReference type="SUPFAM" id="SSF50677">
    <property type="entry name" value="ValRS/IleRS/LeuRS editing domain"/>
    <property type="match status" value="1"/>
</dbReference>
<dbReference type="PROSITE" id="PS00178">
    <property type="entry name" value="AA_TRNA_LIGASE_I"/>
    <property type="match status" value="1"/>
</dbReference>
<evidence type="ECO:0000255" key="1">
    <source>
        <dbReference type="HAMAP-Rule" id="MF_00049"/>
    </source>
</evidence>
<accession>Q83GC6</accession>
<organism>
    <name type="scientific">Tropheryma whipplei (strain Twist)</name>
    <name type="common">Whipple's bacillus</name>
    <dbReference type="NCBI Taxonomy" id="203267"/>
    <lineage>
        <taxon>Bacteria</taxon>
        <taxon>Bacillati</taxon>
        <taxon>Actinomycetota</taxon>
        <taxon>Actinomycetes</taxon>
        <taxon>Micrococcales</taxon>
        <taxon>Tropherymataceae</taxon>
        <taxon>Tropheryma</taxon>
    </lineage>
</organism>
<name>SYL_TROWT</name>
<protein>
    <recommendedName>
        <fullName evidence="1">Leucine--tRNA ligase</fullName>
        <ecNumber evidence="1">6.1.1.4</ecNumber>
    </recommendedName>
    <alternativeName>
        <fullName evidence="1">Leucyl-tRNA synthetase</fullName>
        <shortName evidence="1">LeuRS</shortName>
    </alternativeName>
</protein>
<proteinExistence type="inferred from homology"/>
<keyword id="KW-0030">Aminoacyl-tRNA synthetase</keyword>
<keyword id="KW-0067">ATP-binding</keyword>
<keyword id="KW-0963">Cytoplasm</keyword>
<keyword id="KW-0436">Ligase</keyword>
<keyword id="KW-0547">Nucleotide-binding</keyword>
<keyword id="KW-0648">Protein biosynthesis</keyword>
<keyword id="KW-1185">Reference proteome</keyword>
<reference key="1">
    <citation type="journal article" date="2003" name="Genome Res.">
        <title>Tropheryma whipplei twist: a human pathogenic Actinobacteria with a reduced genome.</title>
        <authorList>
            <person name="Raoult D."/>
            <person name="Ogata H."/>
            <person name="Audic S."/>
            <person name="Robert C."/>
            <person name="Suhre K."/>
            <person name="Drancourt M."/>
            <person name="Claverie J.-M."/>
        </authorList>
    </citation>
    <scope>NUCLEOTIDE SEQUENCE [LARGE SCALE GENOMIC DNA]</scope>
    <source>
        <strain>Twist</strain>
    </source>
</reference>
<feature type="chain" id="PRO_0000152111" description="Leucine--tRNA ligase">
    <location>
        <begin position="1"/>
        <end position="806"/>
    </location>
</feature>
<feature type="short sequence motif" description="'HIGH' region">
    <location>
        <begin position="54"/>
        <end position="64"/>
    </location>
</feature>
<feature type="short sequence motif" description="'KMSKS' region">
    <location>
        <begin position="571"/>
        <end position="575"/>
    </location>
</feature>
<feature type="binding site" evidence="1">
    <location>
        <position position="574"/>
    </location>
    <ligand>
        <name>ATP</name>
        <dbReference type="ChEBI" id="CHEBI:30616"/>
    </ligand>
</feature>
<sequence>MHALRALDTLCENMEYNFRALEEKWAPIWERDRLFEVDENDSETPRKYVLDMFSYPSGDLHMGHAETYAYGDFIARYWRHRGYNVLHPVGWDSFGLPAENAAIKHGSDPKVWTYRNIDQQARSMRLYAASFDWSRRLHTSDPEYYRWNQWLFLKLYKHGLAYRKKAWVNWDPSDRTVLANEQVLPDGTSERSGALVVKKKLTQWFLRITAYADRLLDDLSMLENNWPERVITMQRNWIGRSEGVSIEFNIPTLKRPVTVFTTRPETIFGVTYLALAFDSEVTEELASKSGVLGELLELRHNIDKTHEGVRGLDLKSFAIHPLTGQSVPIFAASYILSDYAKGAVMSVPGHDTRDERFAVRYNLPIVKIMEDNRLISSGKYSGQSVTQARENITRDLCAKSLGRREISYRLRDWLISRQRYWGTPIPILYDSNGSEIPVEEDDLPVLLPDSEGIDLTPSGLSPLGGIHDWVNLHKAGSLFRRDTDTMDTFFDSSWYFLRYLNPDCDTAPFTLEKAKKWGPVDQYCGGVEHAVLHLLYARFITKFLYDIGFVDFKEPFLRLINQGMVVLNGAKMSKSKGNIVEFSKEVSQHGVDVIRFALIFSGPPEEDIDWKDVSMTGAARFLSRCIQTAKEVPKRTADLSLGDIELRKHTHSLLNDIDWLVDSYRFNVIAARLMDLLNITRKKIQTIGADNPAIREAIETIAIALDMFSPYTAEEMWEILGNKYSVSKALFPEVDTTFLEQKTTCAIVQIDGRLRGRLNVLTNITTEQLVHSARSLPAIEHALSGRSVKRVICVPPKLVNFVVEPK</sequence>
<gene>
    <name evidence="1" type="primary">leuS</name>
    <name type="ordered locus">TWT_385</name>
</gene>
<comment type="catalytic activity">
    <reaction evidence="1">
        <text>tRNA(Leu) + L-leucine + ATP = L-leucyl-tRNA(Leu) + AMP + diphosphate</text>
        <dbReference type="Rhea" id="RHEA:11688"/>
        <dbReference type="Rhea" id="RHEA-COMP:9613"/>
        <dbReference type="Rhea" id="RHEA-COMP:9622"/>
        <dbReference type="ChEBI" id="CHEBI:30616"/>
        <dbReference type="ChEBI" id="CHEBI:33019"/>
        <dbReference type="ChEBI" id="CHEBI:57427"/>
        <dbReference type="ChEBI" id="CHEBI:78442"/>
        <dbReference type="ChEBI" id="CHEBI:78494"/>
        <dbReference type="ChEBI" id="CHEBI:456215"/>
        <dbReference type="EC" id="6.1.1.4"/>
    </reaction>
</comment>
<comment type="subcellular location">
    <subcellularLocation>
        <location evidence="1">Cytoplasm</location>
    </subcellularLocation>
</comment>
<comment type="similarity">
    <text evidence="1">Belongs to the class-I aminoacyl-tRNA synthetase family.</text>
</comment>